<dbReference type="EC" id="6.1.1.11" evidence="1"/>
<dbReference type="EMBL" id="AE001363">
    <property type="protein sequence ID" value="AAD19008.1"/>
    <property type="molecule type" value="Genomic_DNA"/>
</dbReference>
<dbReference type="EMBL" id="AE002161">
    <property type="protein sequence ID" value="AAF38777.1"/>
    <property type="molecule type" value="Genomic_DNA"/>
</dbReference>
<dbReference type="EMBL" id="BA000008">
    <property type="protein sequence ID" value="BAA99078.1"/>
    <property type="molecule type" value="Genomic_DNA"/>
</dbReference>
<dbReference type="EMBL" id="AE009440">
    <property type="protein sequence ID" value="AAP98828.1"/>
    <property type="molecule type" value="Genomic_DNA"/>
</dbReference>
<dbReference type="PIR" id="D86599">
    <property type="entry name" value="D86599"/>
</dbReference>
<dbReference type="PIR" id="F72026">
    <property type="entry name" value="F72026"/>
</dbReference>
<dbReference type="RefSeq" id="NP_225065.1">
    <property type="nucleotide sequence ID" value="NC_000922.1"/>
</dbReference>
<dbReference type="RefSeq" id="WP_010883505.1">
    <property type="nucleotide sequence ID" value="NZ_LN847257.1"/>
</dbReference>
<dbReference type="SMR" id="Q9Z736"/>
<dbReference type="STRING" id="406984.CPK_ORF00277"/>
<dbReference type="GeneID" id="45050923"/>
<dbReference type="KEGG" id="cpa:CP_0999"/>
<dbReference type="KEGG" id="cpj:serS"/>
<dbReference type="KEGG" id="cpn:CPn_0870"/>
<dbReference type="KEGG" id="cpt:CpB0899"/>
<dbReference type="PATRIC" id="fig|115713.3.peg.950"/>
<dbReference type="eggNOG" id="COG0172">
    <property type="taxonomic scope" value="Bacteria"/>
</dbReference>
<dbReference type="HOGENOM" id="CLU_023797_1_1_0"/>
<dbReference type="OrthoDB" id="9804647at2"/>
<dbReference type="UniPathway" id="UPA00906">
    <property type="reaction ID" value="UER00895"/>
</dbReference>
<dbReference type="Proteomes" id="UP000000583">
    <property type="component" value="Chromosome"/>
</dbReference>
<dbReference type="Proteomes" id="UP000000801">
    <property type="component" value="Chromosome"/>
</dbReference>
<dbReference type="GO" id="GO:0005737">
    <property type="term" value="C:cytoplasm"/>
    <property type="evidence" value="ECO:0007669"/>
    <property type="project" value="UniProtKB-SubCell"/>
</dbReference>
<dbReference type="GO" id="GO:0005524">
    <property type="term" value="F:ATP binding"/>
    <property type="evidence" value="ECO:0007669"/>
    <property type="project" value="UniProtKB-UniRule"/>
</dbReference>
<dbReference type="GO" id="GO:0004828">
    <property type="term" value="F:serine-tRNA ligase activity"/>
    <property type="evidence" value="ECO:0007669"/>
    <property type="project" value="UniProtKB-UniRule"/>
</dbReference>
<dbReference type="GO" id="GO:0016260">
    <property type="term" value="P:selenocysteine biosynthetic process"/>
    <property type="evidence" value="ECO:0007669"/>
    <property type="project" value="UniProtKB-UniRule"/>
</dbReference>
<dbReference type="GO" id="GO:0006434">
    <property type="term" value="P:seryl-tRNA aminoacylation"/>
    <property type="evidence" value="ECO:0007669"/>
    <property type="project" value="UniProtKB-UniRule"/>
</dbReference>
<dbReference type="CDD" id="cd00770">
    <property type="entry name" value="SerRS_core"/>
    <property type="match status" value="1"/>
</dbReference>
<dbReference type="Gene3D" id="3.30.930.10">
    <property type="entry name" value="Bira Bifunctional Protein, Domain 2"/>
    <property type="match status" value="1"/>
</dbReference>
<dbReference type="Gene3D" id="1.10.287.40">
    <property type="entry name" value="Serine-tRNA synthetase, tRNA binding domain"/>
    <property type="match status" value="1"/>
</dbReference>
<dbReference type="HAMAP" id="MF_00176">
    <property type="entry name" value="Ser_tRNA_synth_type1"/>
    <property type="match status" value="1"/>
</dbReference>
<dbReference type="InterPro" id="IPR002314">
    <property type="entry name" value="aa-tRNA-synt_IIb"/>
</dbReference>
<dbReference type="InterPro" id="IPR006195">
    <property type="entry name" value="aa-tRNA-synth_II"/>
</dbReference>
<dbReference type="InterPro" id="IPR045864">
    <property type="entry name" value="aa-tRNA-synth_II/BPL/LPL"/>
</dbReference>
<dbReference type="InterPro" id="IPR002317">
    <property type="entry name" value="Ser-tRNA-ligase_type_1"/>
</dbReference>
<dbReference type="InterPro" id="IPR015866">
    <property type="entry name" value="Ser-tRNA-synth_1_N"/>
</dbReference>
<dbReference type="InterPro" id="IPR042103">
    <property type="entry name" value="SerRS_1_N_sf"/>
</dbReference>
<dbReference type="InterPro" id="IPR033729">
    <property type="entry name" value="SerRS_core"/>
</dbReference>
<dbReference type="InterPro" id="IPR010978">
    <property type="entry name" value="tRNA-bd_arm"/>
</dbReference>
<dbReference type="NCBIfam" id="TIGR00414">
    <property type="entry name" value="serS"/>
    <property type="match status" value="1"/>
</dbReference>
<dbReference type="PANTHER" id="PTHR43697:SF1">
    <property type="entry name" value="SERINE--TRNA LIGASE"/>
    <property type="match status" value="1"/>
</dbReference>
<dbReference type="PANTHER" id="PTHR43697">
    <property type="entry name" value="SERYL-TRNA SYNTHETASE"/>
    <property type="match status" value="1"/>
</dbReference>
<dbReference type="Pfam" id="PF02403">
    <property type="entry name" value="Seryl_tRNA_N"/>
    <property type="match status" value="1"/>
</dbReference>
<dbReference type="Pfam" id="PF00587">
    <property type="entry name" value="tRNA-synt_2b"/>
    <property type="match status" value="1"/>
</dbReference>
<dbReference type="PIRSF" id="PIRSF001529">
    <property type="entry name" value="Ser-tRNA-synth_IIa"/>
    <property type="match status" value="1"/>
</dbReference>
<dbReference type="PRINTS" id="PR00981">
    <property type="entry name" value="TRNASYNTHSER"/>
</dbReference>
<dbReference type="SUPFAM" id="SSF55681">
    <property type="entry name" value="Class II aaRS and biotin synthetases"/>
    <property type="match status" value="1"/>
</dbReference>
<dbReference type="SUPFAM" id="SSF46589">
    <property type="entry name" value="tRNA-binding arm"/>
    <property type="match status" value="1"/>
</dbReference>
<dbReference type="PROSITE" id="PS50862">
    <property type="entry name" value="AA_TRNA_LIGASE_II"/>
    <property type="match status" value="1"/>
</dbReference>
<protein>
    <recommendedName>
        <fullName evidence="1">Serine--tRNA ligase</fullName>
        <ecNumber evidence="1">6.1.1.11</ecNumber>
    </recommendedName>
    <alternativeName>
        <fullName evidence="1">Seryl-tRNA synthetase</fullName>
        <shortName evidence="1">SerRS</shortName>
    </alternativeName>
    <alternativeName>
        <fullName evidence="1">Seryl-tRNA(Ser/Sec) synthetase</fullName>
    </alternativeName>
</protein>
<comment type="function">
    <text evidence="1">Catalyzes the attachment of serine to tRNA(Ser). Is also able to aminoacylate tRNA(Sec) with serine, to form the misacylated tRNA L-seryl-tRNA(Sec), which will be further converted into selenocysteinyl-tRNA(Sec).</text>
</comment>
<comment type="catalytic activity">
    <reaction evidence="1">
        <text>tRNA(Ser) + L-serine + ATP = L-seryl-tRNA(Ser) + AMP + diphosphate + H(+)</text>
        <dbReference type="Rhea" id="RHEA:12292"/>
        <dbReference type="Rhea" id="RHEA-COMP:9669"/>
        <dbReference type="Rhea" id="RHEA-COMP:9703"/>
        <dbReference type="ChEBI" id="CHEBI:15378"/>
        <dbReference type="ChEBI" id="CHEBI:30616"/>
        <dbReference type="ChEBI" id="CHEBI:33019"/>
        <dbReference type="ChEBI" id="CHEBI:33384"/>
        <dbReference type="ChEBI" id="CHEBI:78442"/>
        <dbReference type="ChEBI" id="CHEBI:78533"/>
        <dbReference type="ChEBI" id="CHEBI:456215"/>
        <dbReference type="EC" id="6.1.1.11"/>
    </reaction>
</comment>
<comment type="catalytic activity">
    <reaction evidence="1">
        <text>tRNA(Sec) + L-serine + ATP = L-seryl-tRNA(Sec) + AMP + diphosphate + H(+)</text>
        <dbReference type="Rhea" id="RHEA:42580"/>
        <dbReference type="Rhea" id="RHEA-COMP:9742"/>
        <dbReference type="Rhea" id="RHEA-COMP:10128"/>
        <dbReference type="ChEBI" id="CHEBI:15378"/>
        <dbReference type="ChEBI" id="CHEBI:30616"/>
        <dbReference type="ChEBI" id="CHEBI:33019"/>
        <dbReference type="ChEBI" id="CHEBI:33384"/>
        <dbReference type="ChEBI" id="CHEBI:78442"/>
        <dbReference type="ChEBI" id="CHEBI:78533"/>
        <dbReference type="ChEBI" id="CHEBI:456215"/>
        <dbReference type="EC" id="6.1.1.11"/>
    </reaction>
</comment>
<comment type="pathway">
    <text evidence="1">Aminoacyl-tRNA biosynthesis; selenocysteinyl-tRNA(Sec) biosynthesis; L-seryl-tRNA(Sec) from L-serine and tRNA(Sec): step 1/1.</text>
</comment>
<comment type="subunit">
    <text evidence="1">Homodimer. The tRNA molecule binds across the dimer.</text>
</comment>
<comment type="subcellular location">
    <subcellularLocation>
        <location evidence="1">Cytoplasm</location>
    </subcellularLocation>
</comment>
<comment type="domain">
    <text evidence="1">Consists of two distinct domains, a catalytic core and a N-terminal extension that is involved in tRNA binding.</text>
</comment>
<comment type="similarity">
    <text evidence="1">Belongs to the class-II aminoacyl-tRNA synthetase family. Type-1 seryl-tRNA synthetase subfamily.</text>
</comment>
<accession>Q9Z736</accession>
<accession>Q9JQ45</accession>
<gene>
    <name evidence="1" type="primary">serS</name>
    <name type="ordered locus">CPn_0870</name>
    <name type="ordered locus">CP_0999</name>
    <name type="ordered locus">CpB0899</name>
</gene>
<name>SYS_CHLPN</name>
<feature type="chain" id="PRO_0000122030" description="Serine--tRNA ligase">
    <location>
        <begin position="1"/>
        <end position="427"/>
    </location>
</feature>
<feature type="binding site" evidence="1">
    <location>
        <begin position="231"/>
        <end position="233"/>
    </location>
    <ligand>
        <name>L-serine</name>
        <dbReference type="ChEBI" id="CHEBI:33384"/>
    </ligand>
</feature>
<feature type="binding site" evidence="1">
    <location>
        <begin position="262"/>
        <end position="264"/>
    </location>
    <ligand>
        <name>ATP</name>
        <dbReference type="ChEBI" id="CHEBI:30616"/>
    </ligand>
</feature>
<feature type="binding site" evidence="1">
    <location>
        <position position="278"/>
    </location>
    <ligand>
        <name>ATP</name>
        <dbReference type="ChEBI" id="CHEBI:30616"/>
    </ligand>
</feature>
<feature type="binding site" evidence="1">
    <location>
        <position position="285"/>
    </location>
    <ligand>
        <name>L-serine</name>
        <dbReference type="ChEBI" id="CHEBI:33384"/>
    </ligand>
</feature>
<feature type="binding site" evidence="1">
    <location>
        <begin position="349"/>
        <end position="352"/>
    </location>
    <ligand>
        <name>ATP</name>
        <dbReference type="ChEBI" id="CHEBI:30616"/>
    </ligand>
</feature>
<feature type="binding site" evidence="1">
    <location>
        <position position="384"/>
    </location>
    <ligand>
        <name>L-serine</name>
        <dbReference type="ChEBI" id="CHEBI:33384"/>
    </ligand>
</feature>
<sequence length="427" mass="48231">MLDIKIIRKTPEECETRLRKKDPKISLEPVLSLDKEVRQLKTDSETLQAQRRLLSQDIHKAKTQGVDATNLIQEVETLAADLEKIEQHLDQKNAQLHELLSHLPNYPADDIPVSEDKAGNQVIKSVGDLPIFSFPPKHHLELNQELDILDFQAAAKTTGSGWPAYKNRGVLLEWALLTYMLQKQAAHGFQLWLPPLLVKKEILFGSGQIPKFDGQYYRVEDGEQYLYLIPTAEVVLNGFRSQDILTEKELPLYYAACTPCFRREAGAAGAQERGLVRVHQFHKVEMFAFTTPNQDDIAYEKMLSIVEEMLTELKLPYRLSLLSTGDMSFTASKTIDAEVWLPGQKAFYEVSSISQCTDFQSRRSGTRYKDSQGKLQFVHTLNGSGLATPRLLVAILENNQQADGSVVIPEVLRPYLGGLEILLPKDQ</sequence>
<organism>
    <name type="scientific">Chlamydia pneumoniae</name>
    <name type="common">Chlamydophila pneumoniae</name>
    <dbReference type="NCBI Taxonomy" id="83558"/>
    <lineage>
        <taxon>Bacteria</taxon>
        <taxon>Pseudomonadati</taxon>
        <taxon>Chlamydiota</taxon>
        <taxon>Chlamydiia</taxon>
        <taxon>Chlamydiales</taxon>
        <taxon>Chlamydiaceae</taxon>
        <taxon>Chlamydia/Chlamydophila group</taxon>
        <taxon>Chlamydia</taxon>
    </lineage>
</organism>
<proteinExistence type="inferred from homology"/>
<reference key="1">
    <citation type="journal article" date="1999" name="Nat. Genet.">
        <title>Comparative genomes of Chlamydia pneumoniae and C. trachomatis.</title>
        <authorList>
            <person name="Kalman S."/>
            <person name="Mitchell W.P."/>
            <person name="Marathe R."/>
            <person name="Lammel C.J."/>
            <person name="Fan J."/>
            <person name="Hyman R.W."/>
            <person name="Olinger L."/>
            <person name="Grimwood J."/>
            <person name="Davis R.W."/>
            <person name="Stephens R.S."/>
        </authorList>
    </citation>
    <scope>NUCLEOTIDE SEQUENCE [LARGE SCALE GENOMIC DNA]</scope>
    <source>
        <strain>CWL029</strain>
    </source>
</reference>
<reference key="2">
    <citation type="journal article" date="2000" name="Nucleic Acids Res.">
        <title>Genome sequences of Chlamydia trachomatis MoPn and Chlamydia pneumoniae AR39.</title>
        <authorList>
            <person name="Read T.D."/>
            <person name="Brunham R.C."/>
            <person name="Shen C."/>
            <person name="Gill S.R."/>
            <person name="Heidelberg J.F."/>
            <person name="White O."/>
            <person name="Hickey E.K."/>
            <person name="Peterson J.D."/>
            <person name="Utterback T.R."/>
            <person name="Berry K.J."/>
            <person name="Bass S."/>
            <person name="Linher K.D."/>
            <person name="Weidman J.F."/>
            <person name="Khouri H.M."/>
            <person name="Craven B."/>
            <person name="Bowman C."/>
            <person name="Dodson R.J."/>
            <person name="Gwinn M.L."/>
            <person name="Nelson W.C."/>
            <person name="DeBoy R.T."/>
            <person name="Kolonay J.F."/>
            <person name="McClarty G."/>
            <person name="Salzberg S.L."/>
            <person name="Eisen J.A."/>
            <person name="Fraser C.M."/>
        </authorList>
    </citation>
    <scope>NUCLEOTIDE SEQUENCE [LARGE SCALE GENOMIC DNA]</scope>
    <source>
        <strain>AR39</strain>
    </source>
</reference>
<reference key="3">
    <citation type="journal article" date="2000" name="Nucleic Acids Res.">
        <title>Comparison of whole genome sequences of Chlamydia pneumoniae J138 from Japan and CWL029 from USA.</title>
        <authorList>
            <person name="Shirai M."/>
            <person name="Hirakawa H."/>
            <person name="Kimoto M."/>
            <person name="Tabuchi M."/>
            <person name="Kishi F."/>
            <person name="Ouchi K."/>
            <person name="Shiba T."/>
            <person name="Ishii K."/>
            <person name="Hattori M."/>
            <person name="Kuhara S."/>
            <person name="Nakazawa T."/>
        </authorList>
    </citation>
    <scope>NUCLEOTIDE SEQUENCE [LARGE SCALE GENOMIC DNA]</scope>
    <source>
        <strain>J138</strain>
    </source>
</reference>
<reference key="4">
    <citation type="submission" date="2002-05" db="EMBL/GenBank/DDBJ databases">
        <title>The genome sequence of Chlamydia pneumoniae TW183 and comparison with other Chlamydia strains based on whole genome sequence analysis.</title>
        <authorList>
            <person name="Geng M.M."/>
            <person name="Schuhmacher A."/>
            <person name="Muehldorfer I."/>
            <person name="Bensch K.W."/>
            <person name="Schaefer K.P."/>
            <person name="Schneider S."/>
            <person name="Pohl T."/>
            <person name="Essig A."/>
            <person name="Marre R."/>
            <person name="Melchers K."/>
        </authorList>
    </citation>
    <scope>NUCLEOTIDE SEQUENCE [LARGE SCALE GENOMIC DNA]</scope>
    <source>
        <strain>TW-183</strain>
    </source>
</reference>
<evidence type="ECO:0000255" key="1">
    <source>
        <dbReference type="HAMAP-Rule" id="MF_00176"/>
    </source>
</evidence>
<keyword id="KW-0030">Aminoacyl-tRNA synthetase</keyword>
<keyword id="KW-0067">ATP-binding</keyword>
<keyword id="KW-0963">Cytoplasm</keyword>
<keyword id="KW-0436">Ligase</keyword>
<keyword id="KW-0547">Nucleotide-binding</keyword>
<keyword id="KW-0648">Protein biosynthesis</keyword>